<proteinExistence type="evidence at protein level"/>
<evidence type="ECO:0000255" key="1"/>
<evidence type="ECO:0000255" key="2">
    <source>
        <dbReference type="HAMAP-Rule" id="MF_01490"/>
    </source>
</evidence>
<evidence type="ECO:0000269" key="3">
    <source>
    </source>
</evidence>
<evidence type="ECO:0000269" key="4">
    <source>
    </source>
</evidence>
<evidence type="ECO:0000269" key="5">
    <source>
    </source>
</evidence>
<evidence type="ECO:0007829" key="6">
    <source>
        <dbReference type="PDB" id="2EO0"/>
    </source>
</evidence>
<protein>
    <recommendedName>
        <fullName evidence="2">Crossover junction endodeoxyribonuclease Hjc</fullName>
        <shortName evidence="2">Hjc</shortName>
        <ecNumber evidence="2">3.1.21.10</ecNumber>
    </recommendedName>
    <alternativeName>
        <fullName evidence="2">Holliday junction resolvase Hjc</fullName>
    </alternativeName>
</protein>
<accession>F9VND5</accession>
<keyword id="KW-0002">3D-structure</keyword>
<keyword id="KW-0227">DNA damage</keyword>
<keyword id="KW-0233">DNA recombination</keyword>
<keyword id="KW-0234">DNA repair</keyword>
<keyword id="KW-0238">DNA-binding</keyword>
<keyword id="KW-0255">Endonuclease</keyword>
<keyword id="KW-0378">Hydrolase</keyword>
<keyword id="KW-0460">Magnesium</keyword>
<keyword id="KW-0479">Metal-binding</keyword>
<keyword id="KW-0540">Nuclease</keyword>
<keyword id="KW-1185">Reference proteome</keyword>
<gene>
    <name evidence="2" type="primary">hjc</name>
    <name type="ordered locus">STK_14440</name>
</gene>
<dbReference type="EC" id="3.1.21.10" evidence="2"/>
<dbReference type="EMBL" id="BA000023">
    <property type="protein sequence ID" value="BAK54581.1"/>
    <property type="molecule type" value="Genomic_DNA"/>
</dbReference>
<dbReference type="RefSeq" id="WP_052846967.1">
    <property type="nucleotide sequence ID" value="NC_003106.2"/>
</dbReference>
<dbReference type="PDB" id="2EO0">
    <property type="method" value="X-ray"/>
    <property type="resolution" value="2.40 A"/>
    <property type="chains" value="A/B=2-144"/>
</dbReference>
<dbReference type="PDBsum" id="2EO0"/>
<dbReference type="SMR" id="F9VND5"/>
<dbReference type="STRING" id="273063.STK_14440"/>
<dbReference type="GeneID" id="1459477"/>
<dbReference type="KEGG" id="sto:STK_14440"/>
<dbReference type="PATRIC" id="fig|273063.9.peg.1646"/>
<dbReference type="eggNOG" id="arCOG00919">
    <property type="taxonomic scope" value="Archaea"/>
</dbReference>
<dbReference type="OrthoDB" id="34330at2157"/>
<dbReference type="EvolutionaryTrace" id="F9VND5"/>
<dbReference type="Proteomes" id="UP000001015">
    <property type="component" value="Chromosome"/>
</dbReference>
<dbReference type="GO" id="GO:0008821">
    <property type="term" value="F:crossover junction DNA endonuclease activity"/>
    <property type="evidence" value="ECO:0007669"/>
    <property type="project" value="UniProtKB-UniRule"/>
</dbReference>
<dbReference type="GO" id="GO:0003677">
    <property type="term" value="F:DNA binding"/>
    <property type="evidence" value="ECO:0007669"/>
    <property type="project" value="UniProtKB-KW"/>
</dbReference>
<dbReference type="GO" id="GO:0000287">
    <property type="term" value="F:magnesium ion binding"/>
    <property type="evidence" value="ECO:0007669"/>
    <property type="project" value="UniProtKB-UniRule"/>
</dbReference>
<dbReference type="GO" id="GO:0006310">
    <property type="term" value="P:DNA recombination"/>
    <property type="evidence" value="ECO:0007669"/>
    <property type="project" value="UniProtKB-UniRule"/>
</dbReference>
<dbReference type="GO" id="GO:0006281">
    <property type="term" value="P:DNA repair"/>
    <property type="evidence" value="ECO:0007669"/>
    <property type="project" value="UniProtKB-UniRule"/>
</dbReference>
<dbReference type="CDD" id="cd00523">
    <property type="entry name" value="Holliday_junction_resolvase"/>
    <property type="match status" value="1"/>
</dbReference>
<dbReference type="Gene3D" id="3.40.1350.10">
    <property type="match status" value="1"/>
</dbReference>
<dbReference type="HAMAP" id="MF_01490">
    <property type="entry name" value="HJ_Resolv_Hjc"/>
    <property type="match status" value="1"/>
</dbReference>
<dbReference type="InterPro" id="IPR002732">
    <property type="entry name" value="Hjc"/>
</dbReference>
<dbReference type="InterPro" id="IPR014428">
    <property type="entry name" value="Hjc_arc"/>
</dbReference>
<dbReference type="InterPro" id="IPR011335">
    <property type="entry name" value="Restrct_endonuc-II-like"/>
</dbReference>
<dbReference type="InterPro" id="IPR011856">
    <property type="entry name" value="tRNA_endonuc-like_dom_sf"/>
</dbReference>
<dbReference type="NCBIfam" id="NF040854">
    <property type="entry name" value="Hol_resolv_Hjc"/>
    <property type="match status" value="1"/>
</dbReference>
<dbReference type="PANTHER" id="PTHR39651">
    <property type="entry name" value="HOLLIDAY JUNCTION RESOLVASE HJC"/>
    <property type="match status" value="1"/>
</dbReference>
<dbReference type="PANTHER" id="PTHR39651:SF1">
    <property type="entry name" value="HOLLIDAY JUNCTION RESOLVASE HJC"/>
    <property type="match status" value="1"/>
</dbReference>
<dbReference type="Pfam" id="PF01870">
    <property type="entry name" value="Hjc"/>
    <property type="match status" value="1"/>
</dbReference>
<dbReference type="PIRSF" id="PIRSF004985">
    <property type="entry name" value="Hlld_jn_rslvs_ar"/>
    <property type="match status" value="1"/>
</dbReference>
<dbReference type="SUPFAM" id="SSF52980">
    <property type="entry name" value="Restriction endonuclease-like"/>
    <property type="match status" value="1"/>
</dbReference>
<sequence length="144" mass="16336">MNSNKSRGSSVERYIVSRLRDKGFAVIRAPASGSKRKDHVPDIIALKSGVIILIEVKSRKNGQKIYIEKEQAEGIREFAKRSGGELFLGVKLPKMLRFIKFDMLRQTEGGNYAIDLETVEKGMELEDLVRYVESKISRTLDSFL</sequence>
<reference key="1">
    <citation type="journal article" date="2001" name="DNA Res.">
        <title>Complete genome sequence of an aerobic thermoacidophilic Crenarchaeon, Sulfolobus tokodaii strain7.</title>
        <authorList>
            <person name="Kawarabayasi Y."/>
            <person name="Hino Y."/>
            <person name="Horikawa H."/>
            <person name="Jin-no K."/>
            <person name="Takahashi M."/>
            <person name="Sekine M."/>
            <person name="Baba S."/>
            <person name="Ankai A."/>
            <person name="Kosugi H."/>
            <person name="Hosoyama A."/>
            <person name="Fukui S."/>
            <person name="Nagai Y."/>
            <person name="Nishijima K."/>
            <person name="Otsuka R."/>
            <person name="Nakazawa H."/>
            <person name="Takamiya M."/>
            <person name="Kato Y."/>
            <person name="Yoshizawa T."/>
            <person name="Tanaka T."/>
            <person name="Kudoh Y."/>
            <person name="Yamazaki J."/>
            <person name="Kushida N."/>
            <person name="Oguchi A."/>
            <person name="Aoki K."/>
            <person name="Masuda S."/>
            <person name="Yanagii M."/>
            <person name="Nishimura M."/>
            <person name="Yamagishi A."/>
            <person name="Oshima T."/>
            <person name="Kikuchi H."/>
        </authorList>
    </citation>
    <scope>NUCLEOTIDE SEQUENCE [LARGE SCALE GENOMIC DNA]</scope>
    <source>
        <strain>DSM 16993 / JCM 10545 / NBRC 100140 / 7</strain>
    </source>
</reference>
<reference key="2">
    <citation type="journal article" date="2008" name="Biochem. Biophys. Res. Commun.">
        <title>Spatial subunit distribution and in vitro functions of the novel trimeric PCNA complex from Sulfolobus tokodaii.</title>
        <authorList>
            <person name="Lu S."/>
            <person name="Li Z."/>
            <person name="Wang Z."/>
            <person name="Ma X."/>
            <person name="Sheng D."/>
            <person name="Ni J."/>
            <person name="Shen Y."/>
        </authorList>
    </citation>
    <scope>ACTIVITY REGULATION</scope>
    <source>
        <strain>DSM 16993 / JCM 10545 / NBRC 100140 / 7</strain>
    </source>
</reference>
<reference key="3">
    <citation type="journal article" date="2008" name="J. Bacteriol.">
        <title>Hjm/Hel308A DNA helicase from Sulfolobus tokodaii promotes replication fork regression and interacts with Hjc endonuclease in vitro.</title>
        <authorList>
            <person name="Li Z."/>
            <person name="Lu S."/>
            <person name="Hou G."/>
            <person name="Ma X."/>
            <person name="Sheng D."/>
            <person name="Ni J."/>
            <person name="Shen Y."/>
        </authorList>
    </citation>
    <scope>FUNCTION AS AN ENDONUCLEASE</scope>
    <scope>INTERACTION WITH HEL308</scope>
    <scope>SUBUNIT</scope>
    <source>
        <strain>DSM 16993 / JCM 10545 / NBRC 100140 / 7</strain>
    </source>
</reference>
<reference key="4">
    <citation type="journal article" date="2012" name="DNA Repair">
        <title>Dissection of the functional domains of an archaeal Holliday junction helicase.</title>
        <authorList>
            <person name="Hong Y."/>
            <person name="Chu M."/>
            <person name="Li Y."/>
            <person name="Ni J."/>
            <person name="Sheng D."/>
            <person name="Hou G."/>
            <person name="She Q."/>
            <person name="Shen Y."/>
        </authorList>
    </citation>
    <scope>INTERACTION WITH HJM</scope>
    <scope>DNA-BINDING</scope>
    <source>
        <strain>DSM 16993 / JCM 10545 / NBRC 100140 / 7</strain>
    </source>
</reference>
<reference key="5">
    <citation type="journal article" date="2012" name="Sci. China Life Sci.">
        <title>Sulfolobus tokodaii RadA paralog, stRadC2, is involved in DNA recombination via interaction with RadA and Hjc.</title>
        <authorList>
            <person name="Wang L."/>
            <person name="Sheng D."/>
            <person name="Han W."/>
            <person name="Huang B."/>
            <person name="Zhu S."/>
            <person name="Ni J."/>
            <person name="Li J."/>
            <person name="Shen Y."/>
        </authorList>
    </citation>
    <scope>ACTIVITY REGULATION</scope>
    <scope>INTERACTION WITH RADC2</scope>
    <scope>SUBUNIT</scope>
    <source>
        <strain>DSM 16993 / JCM 10545 / NBRC 100140 / 7</strain>
    </source>
</reference>
<reference key="6">
    <citation type="submission" date="2007-03" db="PDB data bank">
        <title>Crystal structure of Holliday junction resolvase ST1444.</title>
        <authorList>
            <person name="Sarai N."/>
            <person name="Kagawa W."/>
            <person name="Kurumizaka H."/>
            <person name="Yokoyama S."/>
        </authorList>
    </citation>
    <scope>X-RAY CRYSTALLOGRAPHY (2.40 ANGSTROMS) OF 2-144</scope>
</reference>
<organism>
    <name type="scientific">Sulfurisphaera tokodaii (strain DSM 16993 / JCM 10545 / NBRC 100140 / 7)</name>
    <name type="common">Sulfolobus tokodaii</name>
    <dbReference type="NCBI Taxonomy" id="273063"/>
    <lineage>
        <taxon>Archaea</taxon>
        <taxon>Thermoproteota</taxon>
        <taxon>Thermoprotei</taxon>
        <taxon>Sulfolobales</taxon>
        <taxon>Sulfolobaceae</taxon>
        <taxon>Sulfurisphaera</taxon>
    </lineage>
</organism>
<feature type="chain" id="PRO_0000429160" description="Crossover junction endodeoxyribonuclease Hjc">
    <location>
        <begin position="1"/>
        <end position="144"/>
    </location>
</feature>
<feature type="active site" evidence="2">
    <location>
        <position position="32"/>
    </location>
</feature>
<feature type="binding site" evidence="2">
    <location>
        <position position="12"/>
    </location>
    <ligand>
        <name>Mg(2+)</name>
        <dbReference type="ChEBI" id="CHEBI:18420"/>
    </ligand>
</feature>
<feature type="binding site" evidence="2">
    <location>
        <position position="42"/>
    </location>
    <ligand>
        <name>Mg(2+)</name>
        <dbReference type="ChEBI" id="CHEBI:18420"/>
    </ligand>
</feature>
<feature type="binding site" evidence="2">
    <location>
        <position position="55"/>
    </location>
    <ligand>
        <name>Mg(2+)</name>
        <dbReference type="ChEBI" id="CHEBI:18420"/>
    </ligand>
</feature>
<feature type="site" description="Transition state stabilizer" evidence="1">
    <location>
        <position position="57"/>
    </location>
</feature>
<feature type="helix" evidence="6">
    <location>
        <begin position="10"/>
        <end position="21"/>
    </location>
</feature>
<feature type="strand" evidence="6">
    <location>
        <begin position="25"/>
        <end position="27"/>
    </location>
</feature>
<feature type="helix" evidence="6">
    <location>
        <begin position="37"/>
        <end position="39"/>
    </location>
</feature>
<feature type="strand" evidence="6">
    <location>
        <begin position="42"/>
        <end position="47"/>
    </location>
</feature>
<feature type="strand" evidence="6">
    <location>
        <begin position="50"/>
        <end position="58"/>
    </location>
</feature>
<feature type="strand" evidence="6">
    <location>
        <begin position="65"/>
        <end position="67"/>
    </location>
</feature>
<feature type="helix" evidence="6">
    <location>
        <begin position="69"/>
        <end position="82"/>
    </location>
</feature>
<feature type="strand" evidence="6">
    <location>
        <begin position="85"/>
        <end position="92"/>
    </location>
</feature>
<feature type="strand" evidence="6">
    <location>
        <begin position="95"/>
        <end position="100"/>
    </location>
</feature>
<feature type="helix" evidence="6">
    <location>
        <begin position="101"/>
        <end position="103"/>
    </location>
</feature>
<feature type="strand" evidence="6">
    <location>
        <begin position="112"/>
        <end position="114"/>
    </location>
</feature>
<feature type="helix" evidence="6">
    <location>
        <begin position="116"/>
        <end position="120"/>
    </location>
</feature>
<feature type="helix" evidence="6">
    <location>
        <begin position="125"/>
        <end position="140"/>
    </location>
</feature>
<comment type="function">
    <text evidence="2 3">A structure-specific endonuclease that resolves Holliday junction (HJ) intermediates during genetic recombination. Cleaves 4-way DNA junctions introducing paired nicks in opposing strands, leaving a 5'-terminal phosphate and a 3'-terminal hydroxyl group that are subsequently ligated to produce recombinant products. Inhibits the helicase activity of Hel308 (Hjm).</text>
</comment>
<comment type="catalytic activity">
    <reaction evidence="2">
        <text>Endonucleolytic cleavage at a junction such as a reciprocal single-stranded crossover between two homologous DNA duplexes (Holliday junction).</text>
        <dbReference type="EC" id="3.1.21.10"/>
    </reaction>
</comment>
<comment type="cofactor">
    <cofactor evidence="2">
        <name>Mg(2+)</name>
        <dbReference type="ChEBI" id="CHEBI:18420"/>
    </cofactor>
    <text evidence="2">Binds 1 Mg(2+) ion per subunit.</text>
</comment>
<comment type="activity regulation">
    <text evidence="4 5">Cleavage stimulated by PCNA123 and PCNA323 (PubMed:18782564) and by RadC2 (PubMed:22437993).</text>
</comment>
<comment type="subunit">
    <text evidence="2 3">Homodimer; forms a 2:1 complex with Hel308 (Hjm). May form a complex with Holliday junction DNA, Hjc and Hjm.</text>
</comment>
<comment type="similarity">
    <text evidence="2">Belongs to the Holliday junction resolvase Hjc family.</text>
</comment>
<name>HJC_SULTO</name>